<gene>
    <name type="ORF">DDB_G0290041</name>
</gene>
<dbReference type="EMBL" id="AAFI02000151">
    <property type="protein sequence ID" value="EAL62426.1"/>
    <property type="molecule type" value="Genomic_DNA"/>
</dbReference>
<dbReference type="RefSeq" id="XP_635937.1">
    <property type="nucleotide sequence ID" value="XM_630845.1"/>
</dbReference>
<dbReference type="FunCoup" id="Q54GM5">
    <property type="interactions" value="640"/>
</dbReference>
<dbReference type="PaxDb" id="44689-DDB0188705"/>
<dbReference type="EnsemblProtists" id="EAL62426">
    <property type="protein sequence ID" value="EAL62426"/>
    <property type="gene ID" value="DDB_G0290041"/>
</dbReference>
<dbReference type="GeneID" id="8627458"/>
<dbReference type="KEGG" id="ddi:DDB_G0290041"/>
<dbReference type="dictyBase" id="DDB_G0290041"/>
<dbReference type="VEuPathDB" id="AmoebaDB:DDB_G0290041"/>
<dbReference type="eggNOG" id="ENOG502RING">
    <property type="taxonomic scope" value="Eukaryota"/>
</dbReference>
<dbReference type="HOGENOM" id="CLU_2643199_0_0_1"/>
<dbReference type="InParanoid" id="Q54GM5"/>
<dbReference type="OMA" id="NIGKTHI"/>
<dbReference type="PRO" id="PR:Q54GM5"/>
<dbReference type="Proteomes" id="UP000002195">
    <property type="component" value="Chromosome 5"/>
</dbReference>
<name>Y8705_DICDI</name>
<reference key="1">
    <citation type="journal article" date="2005" name="Nature">
        <title>The genome of the social amoeba Dictyostelium discoideum.</title>
        <authorList>
            <person name="Eichinger L."/>
            <person name="Pachebat J.A."/>
            <person name="Gloeckner G."/>
            <person name="Rajandream M.A."/>
            <person name="Sucgang R."/>
            <person name="Berriman M."/>
            <person name="Song J."/>
            <person name="Olsen R."/>
            <person name="Szafranski K."/>
            <person name="Xu Q."/>
            <person name="Tunggal B."/>
            <person name="Kummerfeld S."/>
            <person name="Madera M."/>
            <person name="Konfortov B.A."/>
            <person name="Rivero F."/>
            <person name="Bankier A.T."/>
            <person name="Lehmann R."/>
            <person name="Hamlin N."/>
            <person name="Davies R."/>
            <person name="Gaudet P."/>
            <person name="Fey P."/>
            <person name="Pilcher K."/>
            <person name="Chen G."/>
            <person name="Saunders D."/>
            <person name="Sodergren E.J."/>
            <person name="Davis P."/>
            <person name="Kerhornou A."/>
            <person name="Nie X."/>
            <person name="Hall N."/>
            <person name="Anjard C."/>
            <person name="Hemphill L."/>
            <person name="Bason N."/>
            <person name="Farbrother P."/>
            <person name="Desany B."/>
            <person name="Just E."/>
            <person name="Morio T."/>
            <person name="Rost R."/>
            <person name="Churcher C.M."/>
            <person name="Cooper J."/>
            <person name="Haydock S."/>
            <person name="van Driessche N."/>
            <person name="Cronin A."/>
            <person name="Goodhead I."/>
            <person name="Muzny D.M."/>
            <person name="Mourier T."/>
            <person name="Pain A."/>
            <person name="Lu M."/>
            <person name="Harper D."/>
            <person name="Lindsay R."/>
            <person name="Hauser H."/>
            <person name="James K.D."/>
            <person name="Quiles M."/>
            <person name="Madan Babu M."/>
            <person name="Saito T."/>
            <person name="Buchrieser C."/>
            <person name="Wardroper A."/>
            <person name="Felder M."/>
            <person name="Thangavelu M."/>
            <person name="Johnson D."/>
            <person name="Knights A."/>
            <person name="Loulseged H."/>
            <person name="Mungall K.L."/>
            <person name="Oliver K."/>
            <person name="Price C."/>
            <person name="Quail M.A."/>
            <person name="Urushihara H."/>
            <person name="Hernandez J."/>
            <person name="Rabbinowitsch E."/>
            <person name="Steffen D."/>
            <person name="Sanders M."/>
            <person name="Ma J."/>
            <person name="Kohara Y."/>
            <person name="Sharp S."/>
            <person name="Simmonds M.N."/>
            <person name="Spiegler S."/>
            <person name="Tivey A."/>
            <person name="Sugano S."/>
            <person name="White B."/>
            <person name="Walker D."/>
            <person name="Woodward J.R."/>
            <person name="Winckler T."/>
            <person name="Tanaka Y."/>
            <person name="Shaulsky G."/>
            <person name="Schleicher M."/>
            <person name="Weinstock G.M."/>
            <person name="Rosenthal A."/>
            <person name="Cox E.C."/>
            <person name="Chisholm R.L."/>
            <person name="Gibbs R.A."/>
            <person name="Loomis W.F."/>
            <person name="Platzer M."/>
            <person name="Kay R.R."/>
            <person name="Williams J.G."/>
            <person name="Dear P.H."/>
            <person name="Noegel A.A."/>
            <person name="Barrell B.G."/>
            <person name="Kuspa A."/>
        </authorList>
    </citation>
    <scope>NUCLEOTIDE SEQUENCE [LARGE SCALE GENOMIC DNA]</scope>
    <source>
        <strain>AX4</strain>
    </source>
</reference>
<keyword id="KW-1185">Reference proteome</keyword>
<sequence>MAIIKPGGHYIVPTKGEEISTFILENEGDELARCELNLNGNIQETLDILPHSTQTKMMDVRGKLTLCNIGKTHIKIL</sequence>
<feature type="chain" id="PRO_0000346926" description="Uncharacterized protein DDB_G0290041">
    <location>
        <begin position="1"/>
        <end position="77"/>
    </location>
</feature>
<proteinExistence type="predicted"/>
<accession>Q54GM5</accession>
<protein>
    <recommendedName>
        <fullName>Uncharacterized protein DDB_G0290041</fullName>
    </recommendedName>
</protein>
<organism>
    <name type="scientific">Dictyostelium discoideum</name>
    <name type="common">Social amoeba</name>
    <dbReference type="NCBI Taxonomy" id="44689"/>
    <lineage>
        <taxon>Eukaryota</taxon>
        <taxon>Amoebozoa</taxon>
        <taxon>Evosea</taxon>
        <taxon>Eumycetozoa</taxon>
        <taxon>Dictyostelia</taxon>
        <taxon>Dictyosteliales</taxon>
        <taxon>Dictyosteliaceae</taxon>
        <taxon>Dictyostelium</taxon>
    </lineage>
</organism>